<reference key="1">
    <citation type="journal article" date="2003" name="Mol. Biol. Evol.">
        <title>Analysis of the Amborella trichopoda chloroplast genome sequence suggests that Amborella is not a basal angiosperm.</title>
        <authorList>
            <person name="Goremykin V.V."/>
            <person name="Hirsch-Ernst K.I."/>
            <person name="Wolfl S."/>
            <person name="Hellwig F.H."/>
        </authorList>
    </citation>
    <scope>NUCLEOTIDE SEQUENCE [LARGE SCALE GENOMIC DNA]</scope>
</reference>
<geneLocation type="chloroplast"/>
<name>PSAC_AMBTC</name>
<accession>Q70XW3</accession>
<keyword id="KW-0004">4Fe-4S</keyword>
<keyword id="KW-0150">Chloroplast</keyword>
<keyword id="KW-0249">Electron transport</keyword>
<keyword id="KW-0408">Iron</keyword>
<keyword id="KW-0411">Iron-sulfur</keyword>
<keyword id="KW-0472">Membrane</keyword>
<keyword id="KW-0479">Metal-binding</keyword>
<keyword id="KW-0560">Oxidoreductase</keyword>
<keyword id="KW-0602">Photosynthesis</keyword>
<keyword id="KW-0603">Photosystem I</keyword>
<keyword id="KW-0934">Plastid</keyword>
<keyword id="KW-1185">Reference proteome</keyword>
<keyword id="KW-0677">Repeat</keyword>
<keyword id="KW-0793">Thylakoid</keyword>
<keyword id="KW-0813">Transport</keyword>
<proteinExistence type="inferred from homology"/>
<sequence length="81" mass="9038">MSHSVKIYDTCIGCTQCVRACPTDVLEMIPWDGCKAKQIASAPRTEDCVGCKRCESACPTDFLSVRVYLWHETTRSMGLAY</sequence>
<gene>
    <name evidence="2" type="primary">psaC</name>
</gene>
<dbReference type="EC" id="1.97.1.12" evidence="2"/>
<dbReference type="EMBL" id="AJ506156">
    <property type="protein sequence ID" value="CAD45157.1"/>
    <property type="molecule type" value="Genomic_DNA"/>
</dbReference>
<dbReference type="RefSeq" id="NP_904150.1">
    <property type="nucleotide sequence ID" value="NC_005086.1"/>
</dbReference>
<dbReference type="SMR" id="Q70XW3"/>
<dbReference type="STRING" id="13333.Q70XW3"/>
<dbReference type="GeneID" id="2546490"/>
<dbReference type="KEGG" id="atr:2546490"/>
<dbReference type="OrthoDB" id="9at2759"/>
<dbReference type="Proteomes" id="UP000017836">
    <property type="component" value="Chloroplast"/>
</dbReference>
<dbReference type="GO" id="GO:0009535">
    <property type="term" value="C:chloroplast thylakoid membrane"/>
    <property type="evidence" value="ECO:0007669"/>
    <property type="project" value="UniProtKB-SubCell"/>
</dbReference>
<dbReference type="GO" id="GO:0009522">
    <property type="term" value="C:photosystem I"/>
    <property type="evidence" value="ECO:0007669"/>
    <property type="project" value="UniProtKB-KW"/>
</dbReference>
<dbReference type="GO" id="GO:0051539">
    <property type="term" value="F:4 iron, 4 sulfur cluster binding"/>
    <property type="evidence" value="ECO:0007669"/>
    <property type="project" value="UniProtKB-KW"/>
</dbReference>
<dbReference type="GO" id="GO:0009055">
    <property type="term" value="F:electron transfer activity"/>
    <property type="evidence" value="ECO:0007669"/>
    <property type="project" value="UniProtKB-UniRule"/>
</dbReference>
<dbReference type="GO" id="GO:0046872">
    <property type="term" value="F:metal ion binding"/>
    <property type="evidence" value="ECO:0007669"/>
    <property type="project" value="UniProtKB-KW"/>
</dbReference>
<dbReference type="GO" id="GO:0016491">
    <property type="term" value="F:oxidoreductase activity"/>
    <property type="evidence" value="ECO:0007669"/>
    <property type="project" value="UniProtKB-KW"/>
</dbReference>
<dbReference type="GO" id="GO:0015979">
    <property type="term" value="P:photosynthesis"/>
    <property type="evidence" value="ECO:0000318"/>
    <property type="project" value="GO_Central"/>
</dbReference>
<dbReference type="GO" id="GO:0009773">
    <property type="term" value="P:photosynthetic electron transport in photosystem I"/>
    <property type="evidence" value="ECO:0007669"/>
    <property type="project" value="InterPro"/>
</dbReference>
<dbReference type="FunFam" id="3.30.70.20:FF:000001">
    <property type="entry name" value="Photosystem I iron-sulfur center"/>
    <property type="match status" value="1"/>
</dbReference>
<dbReference type="Gene3D" id="3.30.70.20">
    <property type="match status" value="1"/>
</dbReference>
<dbReference type="HAMAP" id="MF_01303">
    <property type="entry name" value="PSI_PsaC"/>
    <property type="match status" value="1"/>
</dbReference>
<dbReference type="InterPro" id="IPR017896">
    <property type="entry name" value="4Fe4S_Fe-S-bd"/>
</dbReference>
<dbReference type="InterPro" id="IPR017900">
    <property type="entry name" value="4Fe4S_Fe_S_CS"/>
</dbReference>
<dbReference type="InterPro" id="IPR050157">
    <property type="entry name" value="PSI_iron-sulfur_center"/>
</dbReference>
<dbReference type="InterPro" id="IPR017491">
    <property type="entry name" value="PSI_PsaC"/>
</dbReference>
<dbReference type="NCBIfam" id="TIGR03048">
    <property type="entry name" value="PS_I_psaC"/>
    <property type="match status" value="1"/>
</dbReference>
<dbReference type="PANTHER" id="PTHR24960:SF79">
    <property type="entry name" value="PHOTOSYSTEM I IRON-SULFUR CENTER"/>
    <property type="match status" value="1"/>
</dbReference>
<dbReference type="PANTHER" id="PTHR24960">
    <property type="entry name" value="PHOTOSYSTEM I IRON-SULFUR CENTER-RELATED"/>
    <property type="match status" value="1"/>
</dbReference>
<dbReference type="Pfam" id="PF14697">
    <property type="entry name" value="Fer4_21"/>
    <property type="match status" value="1"/>
</dbReference>
<dbReference type="SUPFAM" id="SSF54862">
    <property type="entry name" value="4Fe-4S ferredoxins"/>
    <property type="match status" value="1"/>
</dbReference>
<dbReference type="PROSITE" id="PS00198">
    <property type="entry name" value="4FE4S_FER_1"/>
    <property type="match status" value="2"/>
</dbReference>
<dbReference type="PROSITE" id="PS51379">
    <property type="entry name" value="4FE4S_FER_2"/>
    <property type="match status" value="2"/>
</dbReference>
<evidence type="ECO:0000250" key="1"/>
<evidence type="ECO:0000255" key="2">
    <source>
        <dbReference type="HAMAP-Rule" id="MF_01303"/>
    </source>
</evidence>
<comment type="function">
    <text evidence="2">Apoprotein for the two 4Fe-4S centers FA and FB of photosystem I (PSI); essential for photochemical activity. FB is the terminal electron acceptor of PSI, donating electrons to ferredoxin. The C-terminus interacts with PsaA/B/D and helps assemble the protein into the PSI complex. Required for binding of PsaD and PsaE to PSI. PSI is a plastocyanin-ferredoxin oxidoreductase, converting photonic excitation into a charge separation, which transfers an electron from the donor P700 chlorophyll pair to the spectroscopically characterized acceptors A0, A1, FX, FA and FB in turn.</text>
</comment>
<comment type="catalytic activity">
    <reaction evidence="2">
        <text>reduced [plastocyanin] + hnu + oxidized [2Fe-2S]-[ferredoxin] = oxidized [plastocyanin] + reduced [2Fe-2S]-[ferredoxin]</text>
        <dbReference type="Rhea" id="RHEA:30407"/>
        <dbReference type="Rhea" id="RHEA-COMP:10000"/>
        <dbReference type="Rhea" id="RHEA-COMP:10001"/>
        <dbReference type="Rhea" id="RHEA-COMP:10039"/>
        <dbReference type="Rhea" id="RHEA-COMP:10040"/>
        <dbReference type="ChEBI" id="CHEBI:29036"/>
        <dbReference type="ChEBI" id="CHEBI:30212"/>
        <dbReference type="ChEBI" id="CHEBI:33737"/>
        <dbReference type="ChEBI" id="CHEBI:33738"/>
        <dbReference type="ChEBI" id="CHEBI:49552"/>
        <dbReference type="EC" id="1.97.1.12"/>
    </reaction>
</comment>
<comment type="cofactor">
    <cofactor evidence="2">
        <name>[4Fe-4S] cluster</name>
        <dbReference type="ChEBI" id="CHEBI:49883"/>
    </cofactor>
    <text evidence="2">Binds 2 [4Fe-4S] clusters. Cluster 2 is most probably the spectroscopically characterized electron acceptor FA and cluster 1 is most probably FB.</text>
</comment>
<comment type="subunit">
    <text evidence="2">The eukaryotic PSI reaction center is composed of at least 11 subunits.</text>
</comment>
<comment type="subcellular location">
    <subcellularLocation>
        <location evidence="2">Plastid</location>
        <location evidence="2">Chloroplast thylakoid membrane</location>
        <topology evidence="2">Peripheral membrane protein</topology>
        <orientation evidence="2">Stromal side</orientation>
    </subcellularLocation>
</comment>
<organism>
    <name type="scientific">Amborella trichopoda</name>
    <dbReference type="NCBI Taxonomy" id="13333"/>
    <lineage>
        <taxon>Eukaryota</taxon>
        <taxon>Viridiplantae</taxon>
        <taxon>Streptophyta</taxon>
        <taxon>Embryophyta</taxon>
        <taxon>Tracheophyta</taxon>
        <taxon>Spermatophyta</taxon>
        <taxon>Magnoliopsida</taxon>
        <taxon>Amborellales</taxon>
        <taxon>Amborellaceae</taxon>
        <taxon>Amborella</taxon>
    </lineage>
</organism>
<feature type="initiator methionine" description="Removed" evidence="1">
    <location>
        <position position="1"/>
    </location>
</feature>
<feature type="chain" id="PRO_0000061967" description="Photosystem I iron-sulfur center">
    <location>
        <begin position="2"/>
        <end position="81"/>
    </location>
</feature>
<feature type="domain" description="4Fe-4S ferredoxin-type 1" evidence="2">
    <location>
        <begin position="2"/>
        <end position="31"/>
    </location>
</feature>
<feature type="domain" description="4Fe-4S ferredoxin-type 2" evidence="2">
    <location>
        <begin position="39"/>
        <end position="68"/>
    </location>
</feature>
<feature type="binding site" evidence="2">
    <location>
        <position position="11"/>
    </location>
    <ligand>
        <name>[4Fe-4S] cluster</name>
        <dbReference type="ChEBI" id="CHEBI:49883"/>
        <label>1</label>
    </ligand>
</feature>
<feature type="binding site" evidence="2">
    <location>
        <position position="14"/>
    </location>
    <ligand>
        <name>[4Fe-4S] cluster</name>
        <dbReference type="ChEBI" id="CHEBI:49883"/>
        <label>1</label>
    </ligand>
</feature>
<feature type="binding site" evidence="2">
    <location>
        <position position="17"/>
    </location>
    <ligand>
        <name>[4Fe-4S] cluster</name>
        <dbReference type="ChEBI" id="CHEBI:49883"/>
        <label>1</label>
    </ligand>
</feature>
<feature type="binding site" evidence="2">
    <location>
        <position position="21"/>
    </location>
    <ligand>
        <name>[4Fe-4S] cluster</name>
        <dbReference type="ChEBI" id="CHEBI:49883"/>
        <label>2</label>
    </ligand>
</feature>
<feature type="binding site" evidence="2">
    <location>
        <position position="48"/>
    </location>
    <ligand>
        <name>[4Fe-4S] cluster</name>
        <dbReference type="ChEBI" id="CHEBI:49883"/>
        <label>2</label>
    </ligand>
</feature>
<feature type="binding site" evidence="2">
    <location>
        <position position="51"/>
    </location>
    <ligand>
        <name>[4Fe-4S] cluster</name>
        <dbReference type="ChEBI" id="CHEBI:49883"/>
        <label>2</label>
    </ligand>
</feature>
<feature type="binding site" evidence="2">
    <location>
        <position position="54"/>
    </location>
    <ligand>
        <name>[4Fe-4S] cluster</name>
        <dbReference type="ChEBI" id="CHEBI:49883"/>
        <label>2</label>
    </ligand>
</feature>
<feature type="binding site" evidence="2">
    <location>
        <position position="58"/>
    </location>
    <ligand>
        <name>[4Fe-4S] cluster</name>
        <dbReference type="ChEBI" id="CHEBI:49883"/>
        <label>1</label>
    </ligand>
</feature>
<protein>
    <recommendedName>
        <fullName evidence="2">Photosystem I iron-sulfur center</fullName>
        <ecNumber evidence="2">1.97.1.12</ecNumber>
    </recommendedName>
    <alternativeName>
        <fullName evidence="2">9 kDa polypeptide</fullName>
    </alternativeName>
    <alternativeName>
        <fullName evidence="2">PSI-C</fullName>
    </alternativeName>
    <alternativeName>
        <fullName evidence="2">Photosystem I subunit VII</fullName>
    </alternativeName>
    <alternativeName>
        <fullName evidence="2">PsaC</fullName>
    </alternativeName>
</protein>